<feature type="chain" id="PRO_0000309208" description="Uncharacterized glycosyltransferase R363">
    <location>
        <begin position="1"/>
        <end position="256"/>
    </location>
</feature>
<name>YR363_MIMIV</name>
<dbReference type="EC" id="2.4.-.-"/>
<dbReference type="EMBL" id="AY653733">
    <property type="protein sequence ID" value="AAV50632.1"/>
    <property type="molecule type" value="Genomic_DNA"/>
</dbReference>
<dbReference type="SMR" id="Q5UR24"/>
<dbReference type="CAZy" id="GT2">
    <property type="family name" value="Glycosyltransferase Family 2"/>
</dbReference>
<dbReference type="KEGG" id="vg:9924983"/>
<dbReference type="OrthoDB" id="1549at10239"/>
<dbReference type="Proteomes" id="UP000001134">
    <property type="component" value="Genome"/>
</dbReference>
<dbReference type="GO" id="GO:0016757">
    <property type="term" value="F:glycosyltransferase activity"/>
    <property type="evidence" value="ECO:0007669"/>
    <property type="project" value="UniProtKB-KW"/>
</dbReference>
<dbReference type="CDD" id="cd00761">
    <property type="entry name" value="Glyco_tranf_GTA_type"/>
    <property type="match status" value="1"/>
</dbReference>
<dbReference type="Gene3D" id="3.90.550.10">
    <property type="entry name" value="Spore Coat Polysaccharide Biosynthesis Protein SpsA, Chain A"/>
    <property type="match status" value="1"/>
</dbReference>
<dbReference type="InterPro" id="IPR001173">
    <property type="entry name" value="Glyco_trans_2-like"/>
</dbReference>
<dbReference type="InterPro" id="IPR029044">
    <property type="entry name" value="Nucleotide-diphossugar_trans"/>
</dbReference>
<dbReference type="Pfam" id="PF00535">
    <property type="entry name" value="Glycos_transf_2"/>
    <property type="match status" value="1"/>
</dbReference>
<dbReference type="SUPFAM" id="SSF53448">
    <property type="entry name" value="Nucleotide-diphospho-sugar transferases"/>
    <property type="match status" value="1"/>
</dbReference>
<protein>
    <recommendedName>
        <fullName>Uncharacterized glycosyltransferase R363</fullName>
        <ecNumber>2.4.-.-</ecNumber>
    </recommendedName>
</protein>
<proteinExistence type="inferred from homology"/>
<organism>
    <name type="scientific">Acanthamoeba polyphaga mimivirus</name>
    <name type="common">APMV</name>
    <dbReference type="NCBI Taxonomy" id="212035"/>
    <lineage>
        <taxon>Viruses</taxon>
        <taxon>Varidnaviria</taxon>
        <taxon>Bamfordvirae</taxon>
        <taxon>Nucleocytoviricota</taxon>
        <taxon>Megaviricetes</taxon>
        <taxon>Imitervirales</taxon>
        <taxon>Mimiviridae</taxon>
        <taxon>Megamimivirinae</taxon>
        <taxon>Mimivirus</taxon>
        <taxon>Mimivirus bradfordmassiliense</taxon>
    </lineage>
</organism>
<accession>Q5UR24</accession>
<sequence>MQEINGTSHLKMGIAITTYSNEKTSATRIQIIRDSLTSLKMFRNNVEVIIVVDGSYNTDHKKLLDEFNGDFEIIYREKNGGISKAKNTCIKLLLAKNIDIGFLADDDVLYCENWHNAYATSILNTKIDHFVYLPPQIYQSVLRKTTYNNIPVIECTSGGIAGCFMTFTPKIIQQIGYFRIYPYVYGCEHRDFSYRCLKNRLVPNIFDIDNSSNYLKLHHLSLDSSSIIVDKGGLALNIEKKKEYLNKFQEYVECIE</sequence>
<gene>
    <name type="ordered locus">MIMI_R363</name>
</gene>
<evidence type="ECO:0000305" key="1"/>
<organismHost>
    <name type="scientific">Acanthamoeba polyphaga</name>
    <name type="common">Amoeba</name>
    <dbReference type="NCBI Taxonomy" id="5757"/>
</organismHost>
<keyword id="KW-0328">Glycosyltransferase</keyword>
<keyword id="KW-1185">Reference proteome</keyword>
<keyword id="KW-0808">Transferase</keyword>
<comment type="similarity">
    <text evidence="1">Belongs to the glycosyltransferase 2 family.</text>
</comment>
<reference key="1">
    <citation type="journal article" date="2004" name="Science">
        <title>The 1.2-megabase genome sequence of Mimivirus.</title>
        <authorList>
            <person name="Raoult D."/>
            <person name="Audic S."/>
            <person name="Robert C."/>
            <person name="Abergel C."/>
            <person name="Renesto P."/>
            <person name="Ogata H."/>
            <person name="La Scola B."/>
            <person name="Susan M."/>
            <person name="Claverie J.-M."/>
        </authorList>
    </citation>
    <scope>NUCLEOTIDE SEQUENCE [LARGE SCALE GENOMIC DNA]</scope>
    <source>
        <strain>Rowbotham-Bradford</strain>
    </source>
</reference>